<proteinExistence type="inferred from homology"/>
<gene>
    <name evidence="1" type="primary">ndk</name>
    <name type="ordered locus">DVU_2333</name>
</gene>
<feature type="chain" id="PRO_0000136977" description="Nucleoside diphosphate kinase">
    <location>
        <begin position="1"/>
        <end position="139"/>
    </location>
</feature>
<feature type="active site" description="Pros-phosphohistidine intermediate" evidence="1">
    <location>
        <position position="116"/>
    </location>
</feature>
<feature type="binding site" evidence="1">
    <location>
        <position position="10"/>
    </location>
    <ligand>
        <name>ATP</name>
        <dbReference type="ChEBI" id="CHEBI:30616"/>
    </ligand>
</feature>
<feature type="binding site" evidence="1">
    <location>
        <position position="58"/>
    </location>
    <ligand>
        <name>ATP</name>
        <dbReference type="ChEBI" id="CHEBI:30616"/>
    </ligand>
</feature>
<feature type="binding site" evidence="1">
    <location>
        <position position="86"/>
    </location>
    <ligand>
        <name>ATP</name>
        <dbReference type="ChEBI" id="CHEBI:30616"/>
    </ligand>
</feature>
<feature type="binding site" evidence="1">
    <location>
        <position position="92"/>
    </location>
    <ligand>
        <name>ATP</name>
        <dbReference type="ChEBI" id="CHEBI:30616"/>
    </ligand>
</feature>
<feature type="binding site" evidence="1">
    <location>
        <position position="103"/>
    </location>
    <ligand>
        <name>ATP</name>
        <dbReference type="ChEBI" id="CHEBI:30616"/>
    </ligand>
</feature>
<feature type="binding site" evidence="1">
    <location>
        <position position="113"/>
    </location>
    <ligand>
        <name>ATP</name>
        <dbReference type="ChEBI" id="CHEBI:30616"/>
    </ligand>
</feature>
<dbReference type="EC" id="2.7.4.6" evidence="1"/>
<dbReference type="EMBL" id="AE017285">
    <property type="protein sequence ID" value="AAS96806.1"/>
    <property type="molecule type" value="Genomic_DNA"/>
</dbReference>
<dbReference type="RefSeq" id="WP_010939606.1">
    <property type="nucleotide sequence ID" value="NC_002937.3"/>
</dbReference>
<dbReference type="RefSeq" id="YP_011546.1">
    <property type="nucleotide sequence ID" value="NC_002937.3"/>
</dbReference>
<dbReference type="SMR" id="Q729L7"/>
<dbReference type="STRING" id="882.DVU_2333"/>
<dbReference type="PaxDb" id="882-DVU_2333"/>
<dbReference type="EnsemblBacteria" id="AAS96806">
    <property type="protein sequence ID" value="AAS96806"/>
    <property type="gene ID" value="DVU_2333"/>
</dbReference>
<dbReference type="KEGG" id="dvu:DVU_2333"/>
<dbReference type="PATRIC" id="fig|882.5.peg.2112"/>
<dbReference type="eggNOG" id="COG0105">
    <property type="taxonomic scope" value="Bacteria"/>
</dbReference>
<dbReference type="HOGENOM" id="CLU_060216_8_1_7"/>
<dbReference type="OrthoDB" id="9801161at2"/>
<dbReference type="PhylomeDB" id="Q729L7"/>
<dbReference type="Proteomes" id="UP000002194">
    <property type="component" value="Chromosome"/>
</dbReference>
<dbReference type="GO" id="GO:0005737">
    <property type="term" value="C:cytoplasm"/>
    <property type="evidence" value="ECO:0007669"/>
    <property type="project" value="UniProtKB-SubCell"/>
</dbReference>
<dbReference type="GO" id="GO:0005524">
    <property type="term" value="F:ATP binding"/>
    <property type="evidence" value="ECO:0007669"/>
    <property type="project" value="UniProtKB-UniRule"/>
</dbReference>
<dbReference type="GO" id="GO:0046872">
    <property type="term" value="F:metal ion binding"/>
    <property type="evidence" value="ECO:0007669"/>
    <property type="project" value="UniProtKB-KW"/>
</dbReference>
<dbReference type="GO" id="GO:0004550">
    <property type="term" value="F:nucleoside diphosphate kinase activity"/>
    <property type="evidence" value="ECO:0007669"/>
    <property type="project" value="UniProtKB-UniRule"/>
</dbReference>
<dbReference type="GO" id="GO:0006241">
    <property type="term" value="P:CTP biosynthetic process"/>
    <property type="evidence" value="ECO:0007669"/>
    <property type="project" value="UniProtKB-UniRule"/>
</dbReference>
<dbReference type="GO" id="GO:0006183">
    <property type="term" value="P:GTP biosynthetic process"/>
    <property type="evidence" value="ECO:0007669"/>
    <property type="project" value="UniProtKB-UniRule"/>
</dbReference>
<dbReference type="GO" id="GO:0006228">
    <property type="term" value="P:UTP biosynthetic process"/>
    <property type="evidence" value="ECO:0007669"/>
    <property type="project" value="UniProtKB-UniRule"/>
</dbReference>
<dbReference type="CDD" id="cd04413">
    <property type="entry name" value="NDPk_I"/>
    <property type="match status" value="1"/>
</dbReference>
<dbReference type="FunFam" id="3.30.70.141:FF:000001">
    <property type="entry name" value="Nucleoside diphosphate kinase"/>
    <property type="match status" value="1"/>
</dbReference>
<dbReference type="Gene3D" id="3.30.70.141">
    <property type="entry name" value="Nucleoside diphosphate kinase-like domain"/>
    <property type="match status" value="1"/>
</dbReference>
<dbReference type="HAMAP" id="MF_00451">
    <property type="entry name" value="NDP_kinase"/>
    <property type="match status" value="1"/>
</dbReference>
<dbReference type="InterPro" id="IPR034907">
    <property type="entry name" value="NDK-like_dom"/>
</dbReference>
<dbReference type="InterPro" id="IPR036850">
    <property type="entry name" value="NDK-like_dom_sf"/>
</dbReference>
<dbReference type="InterPro" id="IPR001564">
    <property type="entry name" value="Nucleoside_diP_kinase"/>
</dbReference>
<dbReference type="InterPro" id="IPR023005">
    <property type="entry name" value="Nucleoside_diP_kinase_AS"/>
</dbReference>
<dbReference type="NCBIfam" id="NF001908">
    <property type="entry name" value="PRK00668.1"/>
    <property type="match status" value="1"/>
</dbReference>
<dbReference type="PANTHER" id="PTHR46161">
    <property type="entry name" value="NUCLEOSIDE DIPHOSPHATE KINASE"/>
    <property type="match status" value="1"/>
</dbReference>
<dbReference type="PANTHER" id="PTHR46161:SF3">
    <property type="entry name" value="NUCLEOSIDE DIPHOSPHATE KINASE DDB_G0292928-RELATED"/>
    <property type="match status" value="1"/>
</dbReference>
<dbReference type="Pfam" id="PF00334">
    <property type="entry name" value="NDK"/>
    <property type="match status" value="1"/>
</dbReference>
<dbReference type="PRINTS" id="PR01243">
    <property type="entry name" value="NUCDPKINASE"/>
</dbReference>
<dbReference type="SMART" id="SM00562">
    <property type="entry name" value="NDK"/>
    <property type="match status" value="1"/>
</dbReference>
<dbReference type="SUPFAM" id="SSF54919">
    <property type="entry name" value="Nucleoside diphosphate kinase, NDK"/>
    <property type="match status" value="1"/>
</dbReference>
<dbReference type="PROSITE" id="PS00469">
    <property type="entry name" value="NDPK"/>
    <property type="match status" value="1"/>
</dbReference>
<dbReference type="PROSITE" id="PS51374">
    <property type="entry name" value="NDPK_LIKE"/>
    <property type="match status" value="1"/>
</dbReference>
<protein>
    <recommendedName>
        <fullName evidence="1">Nucleoside diphosphate kinase</fullName>
        <shortName evidence="1">NDK</shortName>
        <shortName evidence="1">NDP kinase</shortName>
        <ecNumber evidence="1">2.7.4.6</ecNumber>
    </recommendedName>
    <alternativeName>
        <fullName evidence="1">Nucleoside-2-P kinase</fullName>
    </alternativeName>
</protein>
<keyword id="KW-0067">ATP-binding</keyword>
<keyword id="KW-0963">Cytoplasm</keyword>
<keyword id="KW-0418">Kinase</keyword>
<keyword id="KW-0460">Magnesium</keyword>
<keyword id="KW-0479">Metal-binding</keyword>
<keyword id="KW-0546">Nucleotide metabolism</keyword>
<keyword id="KW-0547">Nucleotide-binding</keyword>
<keyword id="KW-0597">Phosphoprotein</keyword>
<keyword id="KW-1185">Reference proteome</keyword>
<keyword id="KW-0808">Transferase</keyword>
<reference key="1">
    <citation type="journal article" date="2004" name="Nat. Biotechnol.">
        <title>The genome sequence of the anaerobic, sulfate-reducing bacterium Desulfovibrio vulgaris Hildenborough.</title>
        <authorList>
            <person name="Heidelberg J.F."/>
            <person name="Seshadri R."/>
            <person name="Haveman S.A."/>
            <person name="Hemme C.L."/>
            <person name="Paulsen I.T."/>
            <person name="Kolonay J.F."/>
            <person name="Eisen J.A."/>
            <person name="Ward N.L."/>
            <person name="Methe B.A."/>
            <person name="Brinkac L.M."/>
            <person name="Daugherty S.C."/>
            <person name="DeBoy R.T."/>
            <person name="Dodson R.J."/>
            <person name="Durkin A.S."/>
            <person name="Madupu R."/>
            <person name="Nelson W.C."/>
            <person name="Sullivan S.A."/>
            <person name="Fouts D.E."/>
            <person name="Haft D.H."/>
            <person name="Selengut J."/>
            <person name="Peterson J.D."/>
            <person name="Davidsen T.M."/>
            <person name="Zafar N."/>
            <person name="Zhou L."/>
            <person name="Radune D."/>
            <person name="Dimitrov G."/>
            <person name="Hance M."/>
            <person name="Tran K."/>
            <person name="Khouri H.M."/>
            <person name="Gill J."/>
            <person name="Utterback T.R."/>
            <person name="Feldblyum T.V."/>
            <person name="Wall J.D."/>
            <person name="Voordouw G."/>
            <person name="Fraser C.M."/>
        </authorList>
    </citation>
    <scope>NUCLEOTIDE SEQUENCE [LARGE SCALE GENOMIC DNA]</scope>
    <source>
        <strain>ATCC 29579 / DSM 644 / CCUG 34227 / NCIMB 8303 / VKM B-1760 / Hildenborough</strain>
    </source>
</reference>
<sequence length="139" mass="15164">MVERTFSIIKPDAVERNLQGEVLAMIQGAGLKVVAMKMIHLTKAQAEGFYAVHRERPFFDSLTTYMCSGPVVCSVLEGENAISRYREIMGATNPANAAEGTIRKKYAVSLEANSVHGSDAPETAAFEISYFFNALEIVG</sequence>
<comment type="function">
    <text evidence="1">Major role in the synthesis of nucleoside triphosphates other than ATP. The ATP gamma phosphate is transferred to the NDP beta phosphate via a ping-pong mechanism, using a phosphorylated active-site intermediate.</text>
</comment>
<comment type="catalytic activity">
    <reaction evidence="1">
        <text>a 2'-deoxyribonucleoside 5'-diphosphate + ATP = a 2'-deoxyribonucleoside 5'-triphosphate + ADP</text>
        <dbReference type="Rhea" id="RHEA:44640"/>
        <dbReference type="ChEBI" id="CHEBI:30616"/>
        <dbReference type="ChEBI" id="CHEBI:61560"/>
        <dbReference type="ChEBI" id="CHEBI:73316"/>
        <dbReference type="ChEBI" id="CHEBI:456216"/>
        <dbReference type="EC" id="2.7.4.6"/>
    </reaction>
</comment>
<comment type="catalytic activity">
    <reaction evidence="1">
        <text>a ribonucleoside 5'-diphosphate + ATP = a ribonucleoside 5'-triphosphate + ADP</text>
        <dbReference type="Rhea" id="RHEA:18113"/>
        <dbReference type="ChEBI" id="CHEBI:30616"/>
        <dbReference type="ChEBI" id="CHEBI:57930"/>
        <dbReference type="ChEBI" id="CHEBI:61557"/>
        <dbReference type="ChEBI" id="CHEBI:456216"/>
        <dbReference type="EC" id="2.7.4.6"/>
    </reaction>
</comment>
<comment type="cofactor">
    <cofactor evidence="1">
        <name>Mg(2+)</name>
        <dbReference type="ChEBI" id="CHEBI:18420"/>
    </cofactor>
</comment>
<comment type="subunit">
    <text evidence="1">Homotetramer.</text>
</comment>
<comment type="subcellular location">
    <subcellularLocation>
        <location evidence="1">Cytoplasm</location>
    </subcellularLocation>
</comment>
<comment type="similarity">
    <text evidence="1">Belongs to the NDK family.</text>
</comment>
<evidence type="ECO:0000255" key="1">
    <source>
        <dbReference type="HAMAP-Rule" id="MF_00451"/>
    </source>
</evidence>
<accession>Q729L7</accession>
<name>NDK_NITV2</name>
<organism>
    <name type="scientific">Nitratidesulfovibrio vulgaris (strain ATCC 29579 / DSM 644 / CCUG 34227 / NCIMB 8303 / VKM B-1760 / Hildenborough)</name>
    <name type="common">Desulfovibrio vulgaris</name>
    <dbReference type="NCBI Taxonomy" id="882"/>
    <lineage>
        <taxon>Bacteria</taxon>
        <taxon>Pseudomonadati</taxon>
        <taxon>Thermodesulfobacteriota</taxon>
        <taxon>Desulfovibrionia</taxon>
        <taxon>Desulfovibrionales</taxon>
        <taxon>Desulfovibrionaceae</taxon>
        <taxon>Nitratidesulfovibrio</taxon>
    </lineage>
</organism>